<protein>
    <recommendedName>
        <fullName evidence="6">NAC domain-containing protein 58</fullName>
        <shortName evidence="6">ONAC058</shortName>
    </recommendedName>
    <alternativeName>
        <fullName evidence="9">Protein NAC-LIKE, ACTIVATED BY AP3/PI homolog</fullName>
        <shortName evidence="7">OsNAP</shortName>
    </alternativeName>
    <alternativeName>
        <fullName evidence="8">Protein PREMATURELY SENILE 1</fullName>
    </alternativeName>
</protein>
<name>NAC58_ORYSJ</name>
<proteinExistence type="evidence at transcript level"/>
<sequence length="392" mass="42196">MVLSNPAMLPPGFRFHPTDEELIVHYLRNRAASSPCPVSIIADVDIYKFDPWDLPSKENYGDREWYFFSPRDRKYPNGIRPNRAAGSGYWKATGTDKPIHSSGGAATNESVGVKKALVFYKGRPPKGTKTNWIMHEYRLAAADAHAANTYRPMKFRNTSMRLDDWVLCRIYKKSSHASPLAVPPLSDHEQDEPCALEENAPLYAPSSSSAASMILQGAAAGAFPSLHAAAAATQRTAMQKIPSISDLLNEYSLSQLFDDGGAAAAAPLQEMARQPDHHHHQQQQHALFGHPVMNHFIANNSMVQLAHLDPSSSAAASTSAGAVVEPPAVTGKRKRSSDGGEPTIQALPPAAAAAKKPNGSCVGATFQIGSALQGSSLGLSHQMLLHSNMGMN</sequence>
<comment type="function">
    <text evidence="3 4 5">Transcription factor that acts as a positive regulator of the jasmonate (JA) pathway to mediate leaf senescence (PubMed:24028154). May directly regulate LOX2, AOC, AOS2, AOC1 and OPR7, which are genes involved in the biosynthesis of JA (PubMed:24028154). Regulates positively leaf senescence by directly targeting senescence-associated genes (SAGs) related to chlorophyll degradation, nutrient transport and other genes associated with abscisic acid-induced leaf senescence (PubMed:24951508). Transcription activator that plays a role in mediating abiotic stress responses through the abscisic acid (ABA) pathway (PubMed:24399239). Possesses transcriptional activator activity in yeast (PubMed:24399239).</text>
</comment>
<comment type="subcellular location">
    <subcellularLocation>
        <location evidence="1 3 4">Nucleus</location>
    </subcellularLocation>
</comment>
<comment type="tissue specificity">
    <text evidence="3 4 5">Expressed in leaves, nodes, internodes and mature seeds (PubMed:24028154). Highly expressed in roots (PubMed:24399239). Expressed in leaf sheaths, flag leaves and inflorescences (PubMed:24399239). Expressed in primary and lateral roots, particularly in the vascular tissues (PubMed:24951508). Expressed in the primary phloem of the culm and leaf sheaths (PubMed:24951508). Expressed principally in the primary phloem and in the peripheral zone of the leaf vascular bundles (PubMed:24951508). Expressed in the floral tissues (PubMed:24951508).</text>
</comment>
<comment type="induction">
    <text evidence="3 4 5">Up-regulated during leaf senescence (PubMed:24028154, PubMed:24951508). Induced by treatment with methyl jasmonate (MeJa) (PubMed:24028154). Induced by salt stress, cold stress, osmotic stress and treatment with hydrogen peroxide (PubMed:24399239). Induced by treatment with abscisic acid (ABA) (PubMed:24399239, PubMed:24951508).</text>
</comment>
<comment type="domain">
    <text evidence="1">The NAC domain includes a DNA binding domain and a dimerization domain.</text>
</comment>
<comment type="miscellaneous">
    <text evidence="3 4 5">Plants overexpressing NAC58 display an accelerated leaf senescence phenotype at the grain-filling stage (PubMed:24028154, PubMed:24951508). The gain-of-function mutant plants ps1-D (T-DNA activation tagging) exhibit premature leaf senescence phenotype (PubMed:24951508). Plants silencing NAC58 exhibit delayed leaf senescence and an extended grain-filling period, resulting in significant increase in the grain yield (PubMed:24951508). Plants overexpressing NAC58 exhibit a significantly reduced rate of water loss, enhanced tolerance to high salinity, drought and low temperature at the vegetative stage, and improved yield under drought stress at the flowering stage (PubMed:24399239).</text>
</comment>
<comment type="sequence caution" evidence="9">
    <conflict type="erroneous gene model prediction">
        <sequence resource="EMBL-CDS" id="BAF11911"/>
    </conflict>
</comment>
<reference key="1">
    <citation type="submission" date="2011-11" db="EMBL/GenBank/DDBJ databases">
        <title>Characterization of OsNACs gene induced by Xanthomonas oryzae pv. oryzae.</title>
        <authorList>
            <person name="Park S."/>
            <person name="Kim B.-G."/>
            <person name="Ahn I.-P."/>
            <person name="Woo H.-J."/>
            <person name="Kim S.-T."/>
            <person name="Bae S.C."/>
        </authorList>
    </citation>
    <scope>NUCLEOTIDE SEQUENCE [MRNA]</scope>
</reference>
<reference key="2">
    <citation type="journal article" date="2005" name="Genome Res.">
        <title>Sequence, annotation, and analysis of synteny between rice chromosome 3 and diverged grass species.</title>
        <authorList>
            <consortium name="The rice chromosome 3 sequencing consortium"/>
            <person name="Buell C.R."/>
            <person name="Yuan Q."/>
            <person name="Ouyang S."/>
            <person name="Liu J."/>
            <person name="Zhu W."/>
            <person name="Wang A."/>
            <person name="Maiti R."/>
            <person name="Haas B."/>
            <person name="Wortman J."/>
            <person name="Pertea M."/>
            <person name="Jones K.M."/>
            <person name="Kim M."/>
            <person name="Overton L."/>
            <person name="Tsitrin T."/>
            <person name="Fadrosh D."/>
            <person name="Bera J."/>
            <person name="Weaver B."/>
            <person name="Jin S."/>
            <person name="Johri S."/>
            <person name="Reardon M."/>
            <person name="Webb K."/>
            <person name="Hill J."/>
            <person name="Moffat K."/>
            <person name="Tallon L."/>
            <person name="Van Aken S."/>
            <person name="Lewis M."/>
            <person name="Utterback T."/>
            <person name="Feldblyum T."/>
            <person name="Zismann V."/>
            <person name="Iobst S."/>
            <person name="Hsiao J."/>
            <person name="de Vazeille A.R."/>
            <person name="Salzberg S.L."/>
            <person name="White O."/>
            <person name="Fraser C.M."/>
            <person name="Yu Y."/>
            <person name="Kim H."/>
            <person name="Rambo T."/>
            <person name="Currie J."/>
            <person name="Collura K."/>
            <person name="Kernodle-Thompson S."/>
            <person name="Wei F."/>
            <person name="Kudrna K."/>
            <person name="Ammiraju J.S.S."/>
            <person name="Luo M."/>
            <person name="Goicoechea J.L."/>
            <person name="Wing R.A."/>
            <person name="Henry D."/>
            <person name="Oates R."/>
            <person name="Palmer M."/>
            <person name="Pries G."/>
            <person name="Saski C."/>
            <person name="Simmons J."/>
            <person name="Soderlund C."/>
            <person name="Nelson W."/>
            <person name="de la Bastide M."/>
            <person name="Spiegel L."/>
            <person name="Nascimento L."/>
            <person name="Huang E."/>
            <person name="Preston R."/>
            <person name="Zutavern T."/>
            <person name="Palmer L."/>
            <person name="O'Shaughnessy A."/>
            <person name="Dike S."/>
            <person name="McCombie W.R."/>
            <person name="Minx P."/>
            <person name="Cordum H."/>
            <person name="Wilson R."/>
            <person name="Jin W."/>
            <person name="Lee H.R."/>
            <person name="Jiang J."/>
            <person name="Jackson S."/>
        </authorList>
    </citation>
    <scope>NUCLEOTIDE SEQUENCE [LARGE SCALE GENOMIC DNA]</scope>
    <source>
        <strain>cv. Nipponbare</strain>
    </source>
</reference>
<reference key="3">
    <citation type="journal article" date="2005" name="Nature">
        <title>The map-based sequence of the rice genome.</title>
        <authorList>
            <consortium name="International rice genome sequencing project (IRGSP)"/>
        </authorList>
    </citation>
    <scope>NUCLEOTIDE SEQUENCE [LARGE SCALE GENOMIC DNA]</scope>
    <source>
        <strain>cv. Nipponbare</strain>
    </source>
</reference>
<reference key="4">
    <citation type="journal article" date="2008" name="Nucleic Acids Res.">
        <title>The rice annotation project database (RAP-DB): 2008 update.</title>
        <authorList>
            <consortium name="The rice annotation project (RAP)"/>
        </authorList>
    </citation>
    <scope>GENOME REANNOTATION</scope>
    <source>
        <strain>cv. Nipponbare</strain>
    </source>
</reference>
<reference key="5">
    <citation type="journal article" date="2013" name="Rice">
        <title>Improvement of the Oryza sativa Nipponbare reference genome using next generation sequence and optical map data.</title>
        <authorList>
            <person name="Kawahara Y."/>
            <person name="de la Bastide M."/>
            <person name="Hamilton J.P."/>
            <person name="Kanamori H."/>
            <person name="McCombie W.R."/>
            <person name="Ouyang S."/>
            <person name="Schwartz D.C."/>
            <person name="Tanaka T."/>
            <person name="Wu J."/>
            <person name="Zhou S."/>
            <person name="Childs K.L."/>
            <person name="Davidson R.M."/>
            <person name="Lin H."/>
            <person name="Quesada-Ocampo L."/>
            <person name="Vaillancourt B."/>
            <person name="Sakai H."/>
            <person name="Lee S.S."/>
            <person name="Kim J."/>
            <person name="Numa H."/>
            <person name="Itoh T."/>
            <person name="Buell C.R."/>
            <person name="Matsumoto T."/>
        </authorList>
    </citation>
    <scope>GENOME REANNOTATION</scope>
    <source>
        <strain>cv. Nipponbare</strain>
    </source>
</reference>
<reference key="6">
    <citation type="submission" date="2006-10" db="EMBL/GenBank/DDBJ databases">
        <title>Oryza sativa full length cDNA.</title>
        <authorList>
            <consortium name="The rice full-length cDNA consortium"/>
        </authorList>
    </citation>
    <scope>NUCLEOTIDE SEQUENCE [LARGE SCALE MRNA]</scope>
    <source>
        <strain>cv. Nipponbare</strain>
    </source>
</reference>
<reference key="7">
    <citation type="journal article" date="2008" name="Mol. Genet. Genomics">
        <title>Systematic sequence analysis and identification of tissue-specific or stress-responsive genes of NAC transcription factor family in rice.</title>
        <authorList>
            <person name="Fang Y."/>
            <person name="You J."/>
            <person name="Xie K."/>
            <person name="Xie W."/>
            <person name="Xiong L."/>
        </authorList>
    </citation>
    <scope>GENE FAMILY</scope>
    <scope>NOMENCLATURE</scope>
</reference>
<reference key="8">
    <citation type="journal article" date="2013" name="BMC Plant Biol.">
        <title>Identification and functional characterization of a rice NAC gene involved in the regulation of leaf senescence.</title>
        <authorList>
            <person name="Zhou Y."/>
            <person name="Huang W."/>
            <person name="Liu L."/>
            <person name="Chen T."/>
            <person name="Zhou F."/>
            <person name="Lin Y."/>
        </authorList>
    </citation>
    <scope>FUNCTION</scope>
    <scope>SUBCELLULAR LOCATION</scope>
    <scope>TISSUE SPECIFICITY</scope>
    <scope>INDUCTION</scope>
</reference>
<reference key="9">
    <citation type="journal article" date="2014" name="Plant Cell Physiol.">
        <title>The NAC family transcription factor OsNAP confers abiotic stress response through the ABA pathway.</title>
        <authorList>
            <person name="Chen X."/>
            <person name="Wang Y."/>
            <person name="Lv B."/>
            <person name="Li J."/>
            <person name="Luo L."/>
            <person name="Lu S."/>
            <person name="Zhang X."/>
            <person name="Ma H."/>
            <person name="Ming F."/>
        </authorList>
    </citation>
    <scope>FUNCTION</scope>
    <scope>SUBCELLULAR LOCATION</scope>
    <scope>TISSUE SPECIFICITY</scope>
    <scope>INDUCTION</scope>
</reference>
<reference key="10">
    <citation type="journal article" date="2014" name="Proc. Natl. Acad. Sci. U.S.A.">
        <title>OsNAP connects abscisic acid and leaf senescence by fine-tuning abscisic acid biosynthesis and directly targeting senescence-associated genes in rice.</title>
        <authorList>
            <person name="Liang C."/>
            <person name="Wang Y."/>
            <person name="Zhu Y."/>
            <person name="Tang J."/>
            <person name="Hu B."/>
            <person name="Liu L."/>
            <person name="Ou S."/>
            <person name="Wu H."/>
            <person name="Sun X."/>
            <person name="Chu J."/>
            <person name="Chu C."/>
        </authorList>
    </citation>
    <scope>FUNCTION</scope>
    <scope>TISSUE SPECIFICITY</scope>
    <scope>INDUCTION</scope>
</reference>
<feature type="chain" id="PRO_0000456288" description="NAC domain-containing protein 58">
    <location>
        <begin position="1"/>
        <end position="392"/>
    </location>
</feature>
<feature type="domain" description="NAC" evidence="1">
    <location>
        <begin position="9"/>
        <end position="173"/>
    </location>
</feature>
<feature type="region of interest" description="Disordered" evidence="2">
    <location>
        <begin position="317"/>
        <end position="345"/>
    </location>
</feature>
<accession>Q8H7M1</accession>
<accession>Q0DS77</accession>
<gene>
    <name evidence="6" type="primary">NAC58</name>
    <name evidence="7" type="synonym">NAP</name>
    <name evidence="11" type="ordered locus">Os03g0327800</name>
    <name evidence="10" type="ordered locus">LOC_Os03g21060</name>
</gene>
<organism>
    <name type="scientific">Oryza sativa subsp. japonica</name>
    <name type="common">Rice</name>
    <dbReference type="NCBI Taxonomy" id="39947"/>
    <lineage>
        <taxon>Eukaryota</taxon>
        <taxon>Viridiplantae</taxon>
        <taxon>Streptophyta</taxon>
        <taxon>Embryophyta</taxon>
        <taxon>Tracheophyta</taxon>
        <taxon>Spermatophyta</taxon>
        <taxon>Magnoliopsida</taxon>
        <taxon>Liliopsida</taxon>
        <taxon>Poales</taxon>
        <taxon>Poaceae</taxon>
        <taxon>BOP clade</taxon>
        <taxon>Oryzoideae</taxon>
        <taxon>Oryzeae</taxon>
        <taxon>Oryzinae</taxon>
        <taxon>Oryza</taxon>
        <taxon>Oryza sativa</taxon>
    </lineage>
</organism>
<evidence type="ECO:0000255" key="1">
    <source>
        <dbReference type="PROSITE-ProRule" id="PRU00353"/>
    </source>
</evidence>
<evidence type="ECO:0000256" key="2">
    <source>
        <dbReference type="SAM" id="MobiDB-lite"/>
    </source>
</evidence>
<evidence type="ECO:0000269" key="3">
    <source>
    </source>
</evidence>
<evidence type="ECO:0000269" key="4">
    <source>
    </source>
</evidence>
<evidence type="ECO:0000269" key="5">
    <source>
    </source>
</evidence>
<evidence type="ECO:0000303" key="6">
    <source>
    </source>
</evidence>
<evidence type="ECO:0000303" key="7">
    <source>
    </source>
</evidence>
<evidence type="ECO:0000303" key="8">
    <source>
    </source>
</evidence>
<evidence type="ECO:0000305" key="9"/>
<evidence type="ECO:0000312" key="10">
    <source>
        <dbReference type="EMBL" id="ABF95729.1"/>
    </source>
</evidence>
<evidence type="ECO:0000312" key="11">
    <source>
        <dbReference type="EMBL" id="BAS84005.1"/>
    </source>
</evidence>
<dbReference type="EMBL" id="JN982313">
    <property type="protein sequence ID" value="AFL91795.1"/>
    <property type="molecule type" value="mRNA"/>
</dbReference>
<dbReference type="EMBL" id="DP000009">
    <property type="protein sequence ID" value="ABF95729.1"/>
    <property type="molecule type" value="Genomic_DNA"/>
</dbReference>
<dbReference type="EMBL" id="AP008209">
    <property type="protein sequence ID" value="BAF11911.2"/>
    <property type="status" value="ALT_SEQ"/>
    <property type="molecule type" value="Genomic_DNA"/>
</dbReference>
<dbReference type="EMBL" id="AP014959">
    <property type="protein sequence ID" value="BAS84005.1"/>
    <property type="molecule type" value="Genomic_DNA"/>
</dbReference>
<dbReference type="EMBL" id="AK243514">
    <property type="protein sequence ID" value="BAH01634.1"/>
    <property type="molecule type" value="mRNA"/>
</dbReference>
<dbReference type="SMR" id="Q8H7M1"/>
<dbReference type="FunCoup" id="Q8H7M1">
    <property type="interactions" value="291"/>
</dbReference>
<dbReference type="STRING" id="39947.Q8H7M1"/>
<dbReference type="PaxDb" id="39947-Q8H7M1"/>
<dbReference type="EnsemblPlants" id="Os03t0327800-01">
    <property type="protein sequence ID" value="Os03t0327800-01"/>
    <property type="gene ID" value="Os03g0327800"/>
</dbReference>
<dbReference type="GeneID" id="4332717"/>
<dbReference type="Gramene" id="Os03t0327800-01">
    <property type="protein sequence ID" value="Os03t0327800-01"/>
    <property type="gene ID" value="Os03g0327800"/>
</dbReference>
<dbReference type="KEGG" id="dosa:Os03g0327800"/>
<dbReference type="KEGG" id="osa:4332717"/>
<dbReference type="eggNOG" id="ENOG502QSIY">
    <property type="taxonomic scope" value="Eukaryota"/>
</dbReference>
<dbReference type="HOGENOM" id="CLU_035664_8_3_1"/>
<dbReference type="InParanoid" id="Q8H7M1"/>
<dbReference type="OMA" id="GHPVMNH"/>
<dbReference type="OrthoDB" id="1921961at2759"/>
<dbReference type="Proteomes" id="UP000000763">
    <property type="component" value="Chromosome 3"/>
</dbReference>
<dbReference type="Proteomes" id="UP000059680">
    <property type="component" value="Chromosome 3"/>
</dbReference>
<dbReference type="GO" id="GO:0005634">
    <property type="term" value="C:nucleus"/>
    <property type="evidence" value="ECO:0007669"/>
    <property type="project" value="UniProtKB-SubCell"/>
</dbReference>
<dbReference type="GO" id="GO:0003677">
    <property type="term" value="F:DNA binding"/>
    <property type="evidence" value="ECO:0007669"/>
    <property type="project" value="UniProtKB-KW"/>
</dbReference>
<dbReference type="GO" id="GO:0009738">
    <property type="term" value="P:abscisic acid-activated signaling pathway"/>
    <property type="evidence" value="ECO:0007669"/>
    <property type="project" value="UniProtKB-KW"/>
</dbReference>
<dbReference type="GO" id="GO:0006355">
    <property type="term" value="P:regulation of DNA-templated transcription"/>
    <property type="evidence" value="ECO:0007669"/>
    <property type="project" value="InterPro"/>
</dbReference>
<dbReference type="FunFam" id="2.170.150.80:FF:000005">
    <property type="entry name" value="NAC transcription factor 56"/>
    <property type="match status" value="1"/>
</dbReference>
<dbReference type="Gene3D" id="2.170.150.80">
    <property type="entry name" value="NAC domain"/>
    <property type="match status" value="1"/>
</dbReference>
<dbReference type="InterPro" id="IPR003441">
    <property type="entry name" value="NAC-dom"/>
</dbReference>
<dbReference type="InterPro" id="IPR036093">
    <property type="entry name" value="NAC_dom_sf"/>
</dbReference>
<dbReference type="PANTHER" id="PTHR31719:SF201">
    <property type="entry name" value="NAC TRANSCRIPTION FACTOR 47"/>
    <property type="match status" value="1"/>
</dbReference>
<dbReference type="PANTHER" id="PTHR31719">
    <property type="entry name" value="NAC TRANSCRIPTION FACTOR 56"/>
    <property type="match status" value="1"/>
</dbReference>
<dbReference type="Pfam" id="PF02365">
    <property type="entry name" value="NAM"/>
    <property type="match status" value="1"/>
</dbReference>
<dbReference type="SUPFAM" id="SSF101941">
    <property type="entry name" value="NAC domain"/>
    <property type="match status" value="1"/>
</dbReference>
<dbReference type="PROSITE" id="PS51005">
    <property type="entry name" value="NAC"/>
    <property type="match status" value="1"/>
</dbReference>
<keyword id="KW-0938">Abscisic acid signaling pathway</keyword>
<keyword id="KW-0238">DNA-binding</keyword>
<keyword id="KW-1184">Jasmonic acid signaling pathway</keyword>
<keyword id="KW-0539">Nucleus</keyword>
<keyword id="KW-1185">Reference proteome</keyword>
<keyword id="KW-0804">Transcription</keyword>
<keyword id="KW-0805">Transcription regulation</keyword>